<accession>B8I6Q1</accession>
<gene>
    <name type="ordered locus">Ccel_2565</name>
</gene>
<keyword id="KW-0963">Cytoplasm</keyword>
<keyword id="KW-0378">Hydrolase</keyword>
<keyword id="KW-0546">Nucleotide metabolism</keyword>
<keyword id="KW-1185">Reference proteome</keyword>
<sequence>MRNIVLASSSPRRKDLLEQIKLPFEIIPSDIEENISELSGTPAKKAEQLSYQKARDVADKVQKGLILGADTIVVIDDEILGKPKDSEDAYNMLKKLSGKEHEVITGICLLDLDNKIELIQHETTFVKFIELDDEKIKAYIKSGEAFGKAGSYAAQGVGAIFVKGIKGCYSNIVGLPLNRLGNMLEKLNEKIIK</sequence>
<proteinExistence type="inferred from homology"/>
<evidence type="ECO:0000255" key="1">
    <source>
        <dbReference type="HAMAP-Rule" id="MF_00528"/>
    </source>
</evidence>
<name>NTPPA_RUMCH</name>
<dbReference type="EC" id="3.6.1.9" evidence="1"/>
<dbReference type="EMBL" id="CP001348">
    <property type="protein sequence ID" value="ACL76893.1"/>
    <property type="molecule type" value="Genomic_DNA"/>
</dbReference>
<dbReference type="RefSeq" id="WP_015925980.1">
    <property type="nucleotide sequence ID" value="NC_011898.1"/>
</dbReference>
<dbReference type="SMR" id="B8I6Q1"/>
<dbReference type="STRING" id="394503.Ccel_2565"/>
<dbReference type="KEGG" id="cce:Ccel_2565"/>
<dbReference type="eggNOG" id="COG0424">
    <property type="taxonomic scope" value="Bacteria"/>
</dbReference>
<dbReference type="HOGENOM" id="CLU_040416_0_0_9"/>
<dbReference type="OrthoDB" id="9807767at2"/>
<dbReference type="Proteomes" id="UP000001349">
    <property type="component" value="Chromosome"/>
</dbReference>
<dbReference type="GO" id="GO:0005737">
    <property type="term" value="C:cytoplasm"/>
    <property type="evidence" value="ECO:0007669"/>
    <property type="project" value="UniProtKB-SubCell"/>
</dbReference>
<dbReference type="GO" id="GO:0036218">
    <property type="term" value="F:dTTP diphosphatase activity"/>
    <property type="evidence" value="ECO:0007669"/>
    <property type="project" value="RHEA"/>
</dbReference>
<dbReference type="GO" id="GO:0036221">
    <property type="term" value="F:UTP diphosphatase activity"/>
    <property type="evidence" value="ECO:0007669"/>
    <property type="project" value="RHEA"/>
</dbReference>
<dbReference type="GO" id="GO:0009117">
    <property type="term" value="P:nucleotide metabolic process"/>
    <property type="evidence" value="ECO:0007669"/>
    <property type="project" value="UniProtKB-KW"/>
</dbReference>
<dbReference type="CDD" id="cd00555">
    <property type="entry name" value="Maf"/>
    <property type="match status" value="1"/>
</dbReference>
<dbReference type="FunFam" id="3.90.950.10:FF:000005">
    <property type="entry name" value="7-methyl-GTP pyrophosphatase"/>
    <property type="match status" value="1"/>
</dbReference>
<dbReference type="Gene3D" id="3.90.950.10">
    <property type="match status" value="1"/>
</dbReference>
<dbReference type="HAMAP" id="MF_00528">
    <property type="entry name" value="Maf"/>
    <property type="match status" value="1"/>
</dbReference>
<dbReference type="InterPro" id="IPR029001">
    <property type="entry name" value="ITPase-like_fam"/>
</dbReference>
<dbReference type="InterPro" id="IPR003697">
    <property type="entry name" value="Maf-like"/>
</dbReference>
<dbReference type="NCBIfam" id="TIGR00172">
    <property type="entry name" value="maf"/>
    <property type="match status" value="1"/>
</dbReference>
<dbReference type="PANTHER" id="PTHR43213">
    <property type="entry name" value="BIFUNCTIONAL DTTP/UTP PYROPHOSPHATASE/METHYLTRANSFERASE PROTEIN-RELATED"/>
    <property type="match status" value="1"/>
</dbReference>
<dbReference type="PANTHER" id="PTHR43213:SF5">
    <property type="entry name" value="BIFUNCTIONAL DTTP_UTP PYROPHOSPHATASE_METHYLTRANSFERASE PROTEIN-RELATED"/>
    <property type="match status" value="1"/>
</dbReference>
<dbReference type="Pfam" id="PF02545">
    <property type="entry name" value="Maf"/>
    <property type="match status" value="1"/>
</dbReference>
<dbReference type="PIRSF" id="PIRSF006305">
    <property type="entry name" value="Maf"/>
    <property type="match status" value="1"/>
</dbReference>
<dbReference type="SUPFAM" id="SSF52972">
    <property type="entry name" value="ITPase-like"/>
    <property type="match status" value="1"/>
</dbReference>
<feature type="chain" id="PRO_1000146285" description="dTTP/UTP pyrophosphatase">
    <location>
        <begin position="1"/>
        <end position="193"/>
    </location>
</feature>
<feature type="active site" description="Proton acceptor" evidence="1">
    <location>
        <position position="70"/>
    </location>
</feature>
<feature type="site" description="Important for substrate specificity" evidence="1">
    <location>
        <position position="12"/>
    </location>
</feature>
<feature type="site" description="Important for substrate specificity" evidence="1">
    <location>
        <position position="71"/>
    </location>
</feature>
<feature type="site" description="Important for substrate specificity" evidence="1">
    <location>
        <position position="155"/>
    </location>
</feature>
<comment type="function">
    <text evidence="1">Nucleoside triphosphate pyrophosphatase that hydrolyzes dTTP and UTP. May have a dual role in cell division arrest and in preventing the incorporation of modified nucleotides into cellular nucleic acids.</text>
</comment>
<comment type="catalytic activity">
    <reaction evidence="1">
        <text>dTTP + H2O = dTMP + diphosphate + H(+)</text>
        <dbReference type="Rhea" id="RHEA:28534"/>
        <dbReference type="ChEBI" id="CHEBI:15377"/>
        <dbReference type="ChEBI" id="CHEBI:15378"/>
        <dbReference type="ChEBI" id="CHEBI:33019"/>
        <dbReference type="ChEBI" id="CHEBI:37568"/>
        <dbReference type="ChEBI" id="CHEBI:63528"/>
        <dbReference type="EC" id="3.6.1.9"/>
    </reaction>
</comment>
<comment type="catalytic activity">
    <reaction evidence="1">
        <text>UTP + H2O = UMP + diphosphate + H(+)</text>
        <dbReference type="Rhea" id="RHEA:29395"/>
        <dbReference type="ChEBI" id="CHEBI:15377"/>
        <dbReference type="ChEBI" id="CHEBI:15378"/>
        <dbReference type="ChEBI" id="CHEBI:33019"/>
        <dbReference type="ChEBI" id="CHEBI:46398"/>
        <dbReference type="ChEBI" id="CHEBI:57865"/>
        <dbReference type="EC" id="3.6.1.9"/>
    </reaction>
</comment>
<comment type="cofactor">
    <cofactor evidence="1">
        <name>a divalent metal cation</name>
        <dbReference type="ChEBI" id="CHEBI:60240"/>
    </cofactor>
</comment>
<comment type="subcellular location">
    <subcellularLocation>
        <location evidence="1">Cytoplasm</location>
    </subcellularLocation>
</comment>
<comment type="similarity">
    <text evidence="1">Belongs to the Maf family. YhdE subfamily.</text>
</comment>
<organism>
    <name type="scientific">Ruminiclostridium cellulolyticum (strain ATCC 35319 / DSM 5812 / JCM 6584 / H10)</name>
    <name type="common">Clostridium cellulolyticum</name>
    <dbReference type="NCBI Taxonomy" id="394503"/>
    <lineage>
        <taxon>Bacteria</taxon>
        <taxon>Bacillati</taxon>
        <taxon>Bacillota</taxon>
        <taxon>Clostridia</taxon>
        <taxon>Eubacteriales</taxon>
        <taxon>Oscillospiraceae</taxon>
        <taxon>Ruminiclostridium</taxon>
    </lineage>
</organism>
<reference key="1">
    <citation type="submission" date="2009-01" db="EMBL/GenBank/DDBJ databases">
        <title>Complete sequence of Clostridium cellulolyticum H10.</title>
        <authorList>
            <consortium name="US DOE Joint Genome Institute"/>
            <person name="Lucas S."/>
            <person name="Copeland A."/>
            <person name="Lapidus A."/>
            <person name="Glavina del Rio T."/>
            <person name="Dalin E."/>
            <person name="Tice H."/>
            <person name="Bruce D."/>
            <person name="Goodwin L."/>
            <person name="Pitluck S."/>
            <person name="Chertkov O."/>
            <person name="Saunders E."/>
            <person name="Brettin T."/>
            <person name="Detter J.C."/>
            <person name="Han C."/>
            <person name="Larimer F."/>
            <person name="Land M."/>
            <person name="Hauser L."/>
            <person name="Kyrpides N."/>
            <person name="Ivanova N."/>
            <person name="Zhou J."/>
            <person name="Richardson P."/>
        </authorList>
    </citation>
    <scope>NUCLEOTIDE SEQUENCE [LARGE SCALE GENOMIC DNA]</scope>
    <source>
        <strain>ATCC 35319 / DSM 5812 / JCM 6584 / H10</strain>
    </source>
</reference>
<protein>
    <recommendedName>
        <fullName evidence="1">dTTP/UTP pyrophosphatase</fullName>
        <shortName evidence="1">dTTPase/UTPase</shortName>
        <ecNumber evidence="1">3.6.1.9</ecNumber>
    </recommendedName>
    <alternativeName>
        <fullName evidence="1">Nucleoside triphosphate pyrophosphatase</fullName>
    </alternativeName>
    <alternativeName>
        <fullName evidence="1">Nucleotide pyrophosphatase</fullName>
        <shortName evidence="1">Nucleotide PPase</shortName>
    </alternativeName>
</protein>